<sequence length="141" mass="16059">MVDMDRISISLPTNLLAEFDEIIEERGYASRSEAIRDSIRDYLIKHKWIHSLEGERAGTISIIYDHHSTDVMEKLTNIQHDYEKLIVATIHMHLDHDHCMEVVLVKGDAGEIKELTDKLTSQKGVKQVKLTVMVPGGNIPQ</sequence>
<reference key="1">
    <citation type="journal article" date="2004" name="J. Bacteriol.">
        <title>Complete genome sequence of the genetically tractable hydrogenotrophic methanogen Methanococcus maripaludis.</title>
        <authorList>
            <person name="Hendrickson E.L."/>
            <person name="Kaul R."/>
            <person name="Zhou Y."/>
            <person name="Bovee D."/>
            <person name="Chapman P."/>
            <person name="Chung J."/>
            <person name="Conway de Macario E."/>
            <person name="Dodsworth J.A."/>
            <person name="Gillett W."/>
            <person name="Graham D.E."/>
            <person name="Hackett M."/>
            <person name="Haydock A.K."/>
            <person name="Kang A."/>
            <person name="Land M.L."/>
            <person name="Levy R."/>
            <person name="Lie T.J."/>
            <person name="Major T.A."/>
            <person name="Moore B.C."/>
            <person name="Porat I."/>
            <person name="Palmeiri A."/>
            <person name="Rouse G."/>
            <person name="Saenphimmachak C."/>
            <person name="Soell D."/>
            <person name="Van Dien S."/>
            <person name="Wang T."/>
            <person name="Whitman W.B."/>
            <person name="Xia Q."/>
            <person name="Zhang Y."/>
            <person name="Larimer F.W."/>
            <person name="Olson M.V."/>
            <person name="Leigh J.A."/>
        </authorList>
    </citation>
    <scope>NUCLEOTIDE SEQUENCE [LARGE SCALE GENOMIC DNA]</scope>
    <source>
        <strain>DSM 14266 / JCM 13030 / NBRC 101832 / S2 / LL</strain>
    </source>
</reference>
<protein>
    <recommendedName>
        <fullName evidence="1">Putative nickel-responsive regulator</fullName>
    </recommendedName>
</protein>
<name>NIKR_METMP</name>
<dbReference type="EMBL" id="BX950229">
    <property type="protein sequence ID" value="CAF29576.1"/>
    <property type="molecule type" value="Genomic_DNA"/>
</dbReference>
<dbReference type="SMR" id="Q6M197"/>
<dbReference type="STRING" id="267377.MMP0020"/>
<dbReference type="EnsemblBacteria" id="CAF29576">
    <property type="protein sequence ID" value="CAF29576"/>
    <property type="gene ID" value="MMP0020"/>
</dbReference>
<dbReference type="KEGG" id="mmp:MMP0020"/>
<dbReference type="PATRIC" id="fig|267377.15.peg.20"/>
<dbReference type="eggNOG" id="arCOG01008">
    <property type="taxonomic scope" value="Archaea"/>
</dbReference>
<dbReference type="HOGENOM" id="CLU_113319_1_2_2"/>
<dbReference type="OrthoDB" id="25654at2157"/>
<dbReference type="Proteomes" id="UP000000590">
    <property type="component" value="Chromosome"/>
</dbReference>
<dbReference type="GO" id="GO:0003677">
    <property type="term" value="F:DNA binding"/>
    <property type="evidence" value="ECO:0007669"/>
    <property type="project" value="UniProtKB-KW"/>
</dbReference>
<dbReference type="GO" id="GO:0003700">
    <property type="term" value="F:DNA-binding transcription factor activity"/>
    <property type="evidence" value="ECO:0007669"/>
    <property type="project" value="UniProtKB-UniRule"/>
</dbReference>
<dbReference type="GO" id="GO:0016151">
    <property type="term" value="F:nickel cation binding"/>
    <property type="evidence" value="ECO:0007669"/>
    <property type="project" value="UniProtKB-UniRule"/>
</dbReference>
<dbReference type="GO" id="GO:0010045">
    <property type="term" value="P:response to nickel cation"/>
    <property type="evidence" value="ECO:0007669"/>
    <property type="project" value="InterPro"/>
</dbReference>
<dbReference type="CDD" id="cd22231">
    <property type="entry name" value="RHH_NikR_HicB-like"/>
    <property type="match status" value="1"/>
</dbReference>
<dbReference type="Gene3D" id="3.30.70.1150">
    <property type="entry name" value="ACT-like. Chain A, domain 2"/>
    <property type="match status" value="1"/>
</dbReference>
<dbReference type="Gene3D" id="1.10.1220.10">
    <property type="entry name" value="Met repressor-like"/>
    <property type="match status" value="1"/>
</dbReference>
<dbReference type="HAMAP" id="MF_00476">
    <property type="entry name" value="NikR"/>
    <property type="match status" value="1"/>
</dbReference>
<dbReference type="InterPro" id="IPR027271">
    <property type="entry name" value="Acetolactate_synth/TF_NikR_C"/>
</dbReference>
<dbReference type="InterPro" id="IPR045865">
    <property type="entry name" value="ACT-like_dom_sf"/>
</dbReference>
<dbReference type="InterPro" id="IPR013321">
    <property type="entry name" value="Arc_rbn_hlx_hlx"/>
</dbReference>
<dbReference type="InterPro" id="IPR002145">
    <property type="entry name" value="CopG"/>
</dbReference>
<dbReference type="InterPro" id="IPR050192">
    <property type="entry name" value="CopG/NikR_regulator"/>
</dbReference>
<dbReference type="InterPro" id="IPR022988">
    <property type="entry name" value="Ni_resp_reg_NikR"/>
</dbReference>
<dbReference type="InterPro" id="IPR010985">
    <property type="entry name" value="Ribbon_hlx_hlx"/>
</dbReference>
<dbReference type="InterPro" id="IPR014864">
    <property type="entry name" value="TF_NikR_Ni-bd_C"/>
</dbReference>
<dbReference type="NCBIfam" id="NF001884">
    <property type="entry name" value="PRK00630.1"/>
    <property type="match status" value="1"/>
</dbReference>
<dbReference type="NCBIfam" id="NF002169">
    <property type="entry name" value="PRK01002.1"/>
    <property type="match status" value="1"/>
</dbReference>
<dbReference type="NCBIfam" id="NF002815">
    <property type="entry name" value="PRK02967.1"/>
    <property type="match status" value="1"/>
</dbReference>
<dbReference type="NCBIfam" id="NF003381">
    <property type="entry name" value="PRK04460.1"/>
    <property type="match status" value="1"/>
</dbReference>
<dbReference type="PANTHER" id="PTHR34719">
    <property type="entry name" value="NICKEL-RESPONSIVE REGULATOR"/>
    <property type="match status" value="1"/>
</dbReference>
<dbReference type="PANTHER" id="PTHR34719:SF2">
    <property type="entry name" value="NICKEL-RESPONSIVE REGULATOR"/>
    <property type="match status" value="1"/>
</dbReference>
<dbReference type="Pfam" id="PF08753">
    <property type="entry name" value="NikR_C"/>
    <property type="match status" value="1"/>
</dbReference>
<dbReference type="Pfam" id="PF01402">
    <property type="entry name" value="RHH_1"/>
    <property type="match status" value="1"/>
</dbReference>
<dbReference type="SUPFAM" id="SSF55021">
    <property type="entry name" value="ACT-like"/>
    <property type="match status" value="1"/>
</dbReference>
<dbReference type="SUPFAM" id="SSF47598">
    <property type="entry name" value="Ribbon-helix-helix"/>
    <property type="match status" value="1"/>
</dbReference>
<feature type="chain" id="PRO_0000139307" description="Putative nickel-responsive regulator">
    <location>
        <begin position="1"/>
        <end position="141"/>
    </location>
</feature>
<feature type="binding site" evidence="1">
    <location>
        <position position="80"/>
    </location>
    <ligand>
        <name>Ni(2+)</name>
        <dbReference type="ChEBI" id="CHEBI:49786"/>
    </ligand>
</feature>
<feature type="binding site" evidence="1">
    <location>
        <position position="91"/>
    </location>
    <ligand>
        <name>Ni(2+)</name>
        <dbReference type="ChEBI" id="CHEBI:49786"/>
    </ligand>
</feature>
<feature type="binding site" evidence="1">
    <location>
        <position position="93"/>
    </location>
    <ligand>
        <name>Ni(2+)</name>
        <dbReference type="ChEBI" id="CHEBI:49786"/>
    </ligand>
</feature>
<feature type="binding site" evidence="1">
    <location>
        <position position="99"/>
    </location>
    <ligand>
        <name>Ni(2+)</name>
        <dbReference type="ChEBI" id="CHEBI:49786"/>
    </ligand>
</feature>
<organism>
    <name type="scientific">Methanococcus maripaludis (strain DSM 14266 / JCM 13030 / NBRC 101832 / S2 / LL)</name>
    <dbReference type="NCBI Taxonomy" id="267377"/>
    <lineage>
        <taxon>Archaea</taxon>
        <taxon>Methanobacteriati</taxon>
        <taxon>Methanobacteriota</taxon>
        <taxon>Methanomada group</taxon>
        <taxon>Methanococci</taxon>
        <taxon>Methanococcales</taxon>
        <taxon>Methanococcaceae</taxon>
        <taxon>Methanococcus</taxon>
    </lineage>
</organism>
<gene>
    <name type="ordered locus">MMP0020</name>
</gene>
<keyword id="KW-0238">DNA-binding</keyword>
<keyword id="KW-0479">Metal-binding</keyword>
<keyword id="KW-0533">Nickel</keyword>
<keyword id="KW-1185">Reference proteome</keyword>
<keyword id="KW-0804">Transcription</keyword>
<keyword id="KW-0805">Transcription regulation</keyword>
<evidence type="ECO:0000255" key="1">
    <source>
        <dbReference type="HAMAP-Rule" id="MF_00476"/>
    </source>
</evidence>
<proteinExistence type="inferred from homology"/>
<accession>Q6M197</accession>
<comment type="function">
    <text evidence="1">Transcriptional regulator.</text>
</comment>
<comment type="cofactor">
    <cofactor evidence="1">
        <name>Ni(2+)</name>
        <dbReference type="ChEBI" id="CHEBI:49786"/>
    </cofactor>
    <text evidence="1">Binds 1 nickel ion per subunit.</text>
</comment>
<comment type="similarity">
    <text evidence="1">Belongs to the transcriptional regulatory CopG/NikR family.</text>
</comment>